<proteinExistence type="inferred from homology"/>
<gene>
    <name type="ordered locus">CNE02340</name>
</gene>
<feature type="chain" id="PRO_0000295557" description="Patatin-like phospholipase domain-containing protein CNE02340">
    <location>
        <begin position="1"/>
        <end position="929"/>
    </location>
</feature>
<feature type="transmembrane region" description="Helical" evidence="2">
    <location>
        <begin position="126"/>
        <end position="146"/>
    </location>
</feature>
<feature type="domain" description="PNPLA" evidence="3">
    <location>
        <begin position="301"/>
        <end position="493"/>
    </location>
</feature>
<feature type="region of interest" description="Disordered" evidence="4">
    <location>
        <begin position="37"/>
        <end position="85"/>
    </location>
</feature>
<feature type="region of interest" description="Disordered" evidence="4">
    <location>
        <begin position="644"/>
        <end position="765"/>
    </location>
</feature>
<feature type="region of interest" description="Disordered" evidence="4">
    <location>
        <begin position="778"/>
        <end position="806"/>
    </location>
</feature>
<feature type="region of interest" description="Disordered" evidence="4">
    <location>
        <begin position="818"/>
        <end position="929"/>
    </location>
</feature>
<feature type="short sequence motif" description="GXSXG" evidence="3">
    <location>
        <begin position="332"/>
        <end position="336"/>
    </location>
</feature>
<feature type="compositionally biased region" description="Low complexity" evidence="4">
    <location>
        <begin position="43"/>
        <end position="54"/>
    </location>
</feature>
<feature type="compositionally biased region" description="Polar residues" evidence="4">
    <location>
        <begin position="652"/>
        <end position="664"/>
    </location>
</feature>
<feature type="compositionally biased region" description="Polar residues" evidence="4">
    <location>
        <begin position="745"/>
        <end position="764"/>
    </location>
</feature>
<feature type="compositionally biased region" description="Low complexity" evidence="4">
    <location>
        <begin position="779"/>
        <end position="806"/>
    </location>
</feature>
<feature type="compositionally biased region" description="Basic and acidic residues" evidence="4">
    <location>
        <begin position="856"/>
        <end position="878"/>
    </location>
</feature>
<feature type="active site" description="Nucleophile" evidence="3">
    <location>
        <position position="334"/>
    </location>
</feature>
<feature type="active site" description="Proton acceptor" evidence="3">
    <location>
        <position position="480"/>
    </location>
</feature>
<reference key="1">
    <citation type="journal article" date="2005" name="Science">
        <title>The genome of the basidiomycetous yeast and human pathogen Cryptococcus neoformans.</title>
        <authorList>
            <person name="Loftus B.J."/>
            <person name="Fung E."/>
            <person name="Roncaglia P."/>
            <person name="Rowley D."/>
            <person name="Amedeo P."/>
            <person name="Bruno D."/>
            <person name="Vamathevan J."/>
            <person name="Miranda M."/>
            <person name="Anderson I.J."/>
            <person name="Fraser J.A."/>
            <person name="Allen J.E."/>
            <person name="Bosdet I.E."/>
            <person name="Brent M.R."/>
            <person name="Chiu R."/>
            <person name="Doering T.L."/>
            <person name="Donlin M.J."/>
            <person name="D'Souza C.A."/>
            <person name="Fox D.S."/>
            <person name="Grinberg V."/>
            <person name="Fu J."/>
            <person name="Fukushima M."/>
            <person name="Haas B.J."/>
            <person name="Huang J.C."/>
            <person name="Janbon G."/>
            <person name="Jones S.J.M."/>
            <person name="Koo H.L."/>
            <person name="Krzywinski M.I."/>
            <person name="Kwon-Chung K.J."/>
            <person name="Lengeler K.B."/>
            <person name="Maiti R."/>
            <person name="Marra M.A."/>
            <person name="Marra R.E."/>
            <person name="Mathewson C.A."/>
            <person name="Mitchell T.G."/>
            <person name="Pertea M."/>
            <person name="Riggs F.R."/>
            <person name="Salzberg S.L."/>
            <person name="Schein J.E."/>
            <person name="Shvartsbeyn A."/>
            <person name="Shin H."/>
            <person name="Shumway M."/>
            <person name="Specht C.A."/>
            <person name="Suh B.B."/>
            <person name="Tenney A."/>
            <person name="Utterback T.R."/>
            <person name="Wickes B.L."/>
            <person name="Wortman J.R."/>
            <person name="Wye N.H."/>
            <person name="Kronstad J.W."/>
            <person name="Lodge J.K."/>
            <person name="Heitman J."/>
            <person name="Davis R.W."/>
            <person name="Fraser C.M."/>
            <person name="Hyman R.W."/>
        </authorList>
    </citation>
    <scope>NUCLEOTIDE SEQUENCE [LARGE SCALE GENOMIC DNA]</scope>
    <source>
        <strain>JEC21 / ATCC MYA-565</strain>
    </source>
</reference>
<protein>
    <recommendedName>
        <fullName>Patatin-like phospholipase domain-containing protein CNE02340</fullName>
        <ecNumber>3.1.1.-</ecNumber>
    </recommendedName>
</protein>
<accession>P0CP52</accession>
<accession>Q55SE8</accession>
<accession>Q5KGU2</accession>
<dbReference type="EC" id="3.1.1.-"/>
<dbReference type="EMBL" id="AE017345">
    <property type="protein sequence ID" value="AAW43621.2"/>
    <property type="molecule type" value="Genomic_DNA"/>
</dbReference>
<dbReference type="RefSeq" id="XP_024512893.1">
    <property type="nucleotide sequence ID" value="XM_024657216.1"/>
</dbReference>
<dbReference type="RefSeq" id="XP_570928.1">
    <property type="nucleotide sequence ID" value="XM_570928.1"/>
</dbReference>
<dbReference type="STRING" id="214684.P0CP52"/>
<dbReference type="PaxDb" id="214684-P0CP52"/>
<dbReference type="GeneID" id="3257983"/>
<dbReference type="eggNOG" id="KOG2214">
    <property type="taxonomic scope" value="Eukaryota"/>
</dbReference>
<dbReference type="HOGENOM" id="CLU_009031_2_1_1"/>
<dbReference type="InParanoid" id="P0CP52"/>
<dbReference type="Proteomes" id="UP000002149">
    <property type="component" value="Chromosome 5"/>
</dbReference>
<dbReference type="GO" id="GO:0016020">
    <property type="term" value="C:membrane"/>
    <property type="evidence" value="ECO:0007669"/>
    <property type="project" value="UniProtKB-SubCell"/>
</dbReference>
<dbReference type="GO" id="GO:0004806">
    <property type="term" value="F:triacylglycerol lipase activity"/>
    <property type="evidence" value="ECO:0007669"/>
    <property type="project" value="InterPro"/>
</dbReference>
<dbReference type="GO" id="GO:0016042">
    <property type="term" value="P:lipid catabolic process"/>
    <property type="evidence" value="ECO:0007669"/>
    <property type="project" value="UniProtKB-KW"/>
</dbReference>
<dbReference type="GO" id="GO:0006641">
    <property type="term" value="P:triglyceride metabolic process"/>
    <property type="evidence" value="ECO:0007669"/>
    <property type="project" value="UniProtKB-ARBA"/>
</dbReference>
<dbReference type="CDD" id="cd07232">
    <property type="entry name" value="Pat_PLPL"/>
    <property type="match status" value="1"/>
</dbReference>
<dbReference type="Gene3D" id="3.40.1090.10">
    <property type="entry name" value="Cytosolic phospholipase A2 catalytic domain"/>
    <property type="match status" value="2"/>
</dbReference>
<dbReference type="InterPro" id="IPR016035">
    <property type="entry name" value="Acyl_Trfase/lysoPLipase"/>
</dbReference>
<dbReference type="InterPro" id="IPR050301">
    <property type="entry name" value="NTE"/>
</dbReference>
<dbReference type="InterPro" id="IPR002641">
    <property type="entry name" value="PNPLA_dom"/>
</dbReference>
<dbReference type="InterPro" id="IPR021771">
    <property type="entry name" value="Triacylglycerol_lipase_N"/>
</dbReference>
<dbReference type="PANTHER" id="PTHR14226">
    <property type="entry name" value="NEUROPATHY TARGET ESTERASE/SWISS CHEESE D.MELANOGASTER"/>
    <property type="match status" value="1"/>
</dbReference>
<dbReference type="PANTHER" id="PTHR14226:SF66">
    <property type="entry name" value="TRIACYLGLYCEROL LIPASE PTL2"/>
    <property type="match status" value="1"/>
</dbReference>
<dbReference type="Pfam" id="PF11815">
    <property type="entry name" value="DUF3336"/>
    <property type="match status" value="1"/>
</dbReference>
<dbReference type="Pfam" id="PF01734">
    <property type="entry name" value="Patatin"/>
    <property type="match status" value="1"/>
</dbReference>
<dbReference type="SUPFAM" id="SSF52151">
    <property type="entry name" value="FabD/lysophospholipase-like"/>
    <property type="match status" value="1"/>
</dbReference>
<dbReference type="PROSITE" id="PS51635">
    <property type="entry name" value="PNPLA"/>
    <property type="match status" value="1"/>
</dbReference>
<name>PLPL_CRYNJ</name>
<evidence type="ECO:0000250" key="1"/>
<evidence type="ECO:0000255" key="2"/>
<evidence type="ECO:0000255" key="3">
    <source>
        <dbReference type="PROSITE-ProRule" id="PRU01161"/>
    </source>
</evidence>
<evidence type="ECO:0000256" key="4">
    <source>
        <dbReference type="SAM" id="MobiDB-lite"/>
    </source>
</evidence>
<evidence type="ECO:0000305" key="5"/>
<comment type="function">
    <text evidence="1">Probable lipid hydrolase.</text>
</comment>
<comment type="subcellular location">
    <subcellularLocation>
        <location evidence="5">Membrane</location>
        <topology evidence="5">Single-pass membrane protein</topology>
    </subcellularLocation>
</comment>
<comment type="similarity">
    <text evidence="5">Belongs to the PLPL family.</text>
</comment>
<sequence length="929" mass="103065">MPPSPPSSAAADQWNIDYVNEDHLKAFAQALSYNDVQPLDGDSSPLSPRSFSLPPESPQLSTASVKAPPPTWKYGPDNGTLRSGRDTEERVEKLTATSDFAPIHQRVSRKRQRATSQGLTYNVIRWPLLFFIFFIIYLEFSAYVITRQIVNIFEWLVAWRGYKAKLRKELRKAKTYDEWVNTAKKLDKHLGFDDWKDVEEDSYFDWALVRRVRRTLTRLRAANDTRGLMDALAVCVRANFAGTESVKMYSETFIGTKKAVEAHIKEVAACLDYVRTATDVSLEEKRAFFRAVNKHYGSSALCLSGGASFGYYHFGVIKAFLEADLLPRVITGTSAGGLCAALLCTRTDSELKELLVPELADKITACSDPFTVWFKRFRQTGARFDTIDWARRSMWFTRGSLTFKEAYTKTGRALNISVVPSDRHSPTILLNHLTAPNCLIWSAILASAAVPGILNPVVLMAKDRSGNIKPHNLGGSRFKDGSLREDIPLGSLHTQFNCNFSIVSQTNPHIHLFFFAPRGSVGRPVAHRKGKGWRGGFILSALESYIKLDLSKHFKVIRDLDLMPQILQSDWSGVFLQRFSGDLTLTPRSTIGDWFHILSDPDRPQMKRMLRVGERVAWPALGMVRNRMTVERAILRGRSEVRTALSHDRTSNDPATSLPETNPELTGALDHVPIESDVDAGFVSRSRRARNKTGSKGGDTPEEQLNLAGVFQLDESSKGVRRRKQKKSGMPLVAEPLGELPEVSPTHSPIATESPQRNYTSNFGDSFRHVRAPSLPALSSPFRSIRSNTSSSSNNVQSPSSSQRFRSQLSITRWFGGVSESSSDEEDEDLGGLQSGEATASSGEEGIPTFQLDSAVESHSDRSEDEMLHSGANVKEEYQSEESEGKIPIPGGERVTQEKIDSSMASGERLRPAGGSKGSAKTPPVQDGA</sequence>
<organism>
    <name type="scientific">Cryptococcus neoformans var. neoformans serotype D (strain JEC21 / ATCC MYA-565)</name>
    <name type="common">Filobasidiella neoformans</name>
    <dbReference type="NCBI Taxonomy" id="214684"/>
    <lineage>
        <taxon>Eukaryota</taxon>
        <taxon>Fungi</taxon>
        <taxon>Dikarya</taxon>
        <taxon>Basidiomycota</taxon>
        <taxon>Agaricomycotina</taxon>
        <taxon>Tremellomycetes</taxon>
        <taxon>Tremellales</taxon>
        <taxon>Cryptococcaceae</taxon>
        <taxon>Cryptococcus</taxon>
        <taxon>Cryptococcus neoformans species complex</taxon>
    </lineage>
</organism>
<keyword id="KW-0378">Hydrolase</keyword>
<keyword id="KW-0442">Lipid degradation</keyword>
<keyword id="KW-0443">Lipid metabolism</keyword>
<keyword id="KW-0472">Membrane</keyword>
<keyword id="KW-1185">Reference proteome</keyword>
<keyword id="KW-0812">Transmembrane</keyword>
<keyword id="KW-1133">Transmembrane helix</keyword>